<accession>P20950</accession>
<dbReference type="EMBL" id="X16723">
    <property type="protein sequence ID" value="CAA34704.1"/>
    <property type="molecule type" value="mRNA"/>
</dbReference>
<dbReference type="SMR" id="P20950"/>
<dbReference type="VEuPathDB" id="TriTrypDB:TEOVI_000108400"/>
<dbReference type="GO" id="GO:0005886">
    <property type="term" value="C:plasma membrane"/>
    <property type="evidence" value="ECO:0007669"/>
    <property type="project" value="UniProtKB-SubCell"/>
</dbReference>
<dbReference type="GO" id="GO:0098552">
    <property type="term" value="C:side of membrane"/>
    <property type="evidence" value="ECO:0007669"/>
    <property type="project" value="UniProtKB-KW"/>
</dbReference>
<dbReference type="InterPro" id="IPR027446">
    <property type="entry name" value="VSG_C_dom_sf"/>
</dbReference>
<dbReference type="SUPFAM" id="SSF58087">
    <property type="entry name" value="Variant surface glycoprotein (N-terminal domain)"/>
    <property type="match status" value="1"/>
</dbReference>
<dbReference type="SUPFAM" id="SSF118251">
    <property type="entry name" value="Variant surface glycoprotein MITAT 1.2, VSG 221, C-terminal domain"/>
    <property type="match status" value="1"/>
</dbReference>
<protein>
    <recommendedName>
        <fullName>Variant surface glycoprotein 20</fullName>
        <shortName>VSG-20</shortName>
    </recommendedName>
</protein>
<proteinExistence type="evidence at transcript level"/>
<organism>
    <name type="scientific">Trypanosoma equiperdum</name>
    <dbReference type="NCBI Taxonomy" id="5694"/>
    <lineage>
        <taxon>Eukaryota</taxon>
        <taxon>Discoba</taxon>
        <taxon>Euglenozoa</taxon>
        <taxon>Kinetoplastea</taxon>
        <taxon>Metakinetoplastina</taxon>
        <taxon>Trypanosomatida</taxon>
        <taxon>Trypanosomatidae</taxon>
        <taxon>Trypanosoma</taxon>
    </lineage>
</organism>
<keyword id="KW-1003">Cell membrane</keyword>
<keyword id="KW-0325">Glycoprotein</keyword>
<keyword id="KW-0336">GPI-anchor</keyword>
<keyword id="KW-0449">Lipoprotein</keyword>
<keyword id="KW-0472">Membrane</keyword>
<keyword id="KW-0732">Signal</keyword>
<keyword id="KW-0821">Trypanosomiasis</keyword>
<name>VSG2_TRYEQ</name>
<feature type="signal peptide" evidence="2">
    <location>
        <begin position="1"/>
        <end position="20"/>
    </location>
</feature>
<feature type="chain" id="PRO_0000036457" description="Variant surface glycoprotein 20">
    <location>
        <begin position="21"/>
        <end position="440"/>
    </location>
</feature>
<feature type="propeptide" id="PRO_0000036458" description="Removed in mature form" evidence="2">
    <location>
        <begin position="441"/>
        <end position="457"/>
    </location>
</feature>
<feature type="region of interest" description="Disordered" evidence="3">
    <location>
        <begin position="385"/>
        <end position="406"/>
    </location>
</feature>
<feature type="compositionally biased region" description="Polar residues" evidence="3">
    <location>
        <begin position="385"/>
        <end position="397"/>
    </location>
</feature>
<feature type="lipid moiety-binding region" description="GPI-anchor amidated serine" evidence="2">
    <location>
        <position position="440"/>
    </location>
</feature>
<feature type="glycosylation site" description="N-linked (GlcNAc...) asparagine" evidence="2">
    <location>
        <position position="436"/>
    </location>
</feature>
<reference key="1">
    <citation type="journal article" date="1989" name="Genes Dev.">
        <title>Antigenic diversity by the recombination of pseudogenes.</title>
        <authorList>
            <person name="Thon G."/>
            <person name="Baltz T."/>
            <person name="Eisen H."/>
        </authorList>
    </citation>
    <scope>NUCLEOTIDE SEQUENCE [MRNA]</scope>
    <source>
        <strain>BoTat 20</strain>
    </source>
</reference>
<comment type="function">
    <text>VSG forms a coat on the surface of the parasite. The trypanosome evades the immune response of the host by expressing a series of antigenically distinct VSGs from an estimated 1000 VSG genes.</text>
</comment>
<comment type="subcellular location">
    <subcellularLocation>
        <location>Cell membrane</location>
        <topology>Lipid-anchor</topology>
        <topology>GPI-anchor</topology>
    </subcellularLocation>
    <text evidence="1">A soluble form is released from ruptured cells by the action of a PI-PLC.</text>
</comment>
<evidence type="ECO:0000250" key="1"/>
<evidence type="ECO:0000255" key="2"/>
<evidence type="ECO:0000256" key="3">
    <source>
        <dbReference type="SAM" id="MobiDB-lite"/>
    </source>
</evidence>
<sequence>MFTQAVIALIGLVSIRTGKTEDVTPCTTNCGCWARLEKQITVYRGDYSAAEENLKENKKNFGKIIAATVLGSEKLKATVAPVLLSAAQIIHECEEALTTARPAILDAEKKVAELRALYDVQQKLKEGNGELQLHIQDDTNINTAKEVPKANLGNINKKGCADDLNTPDAATIDKTNIETEGPTPKVITHVHVEARCQRDGTPTNGCHDGQLGQNGKLEFSLTYDSKDTNDLATWLADTATKKQISATEVDFIGNLNTEANTAIKGLKSSNPAPACSKKIRDYKTIADNSKFNLMVTKALIGKTDAEAGQESKEPELAAAITKYYGTEGTKFEDQLWKAIERTPAYLGDQKKEQTTKIEKLETLTEVGEATARGLVKQLAAGAQARQTASGDDQSAENQCGGKKEDECKDGCELVEGVCKPVKQGEGENKEKTGTTNTTGSNSFVIKKAPLWLAFLLF</sequence>